<accession>P44502</accession>
<dbReference type="EC" id="2.5.1.48"/>
<dbReference type="EMBL" id="L42023">
    <property type="protein sequence ID" value="AAC21764.1"/>
    <property type="status" value="ALT_INIT"/>
    <property type="molecule type" value="Genomic_DNA"/>
</dbReference>
<dbReference type="RefSeq" id="NP_438259.1">
    <property type="nucleotide sequence ID" value="NC_000907.1"/>
</dbReference>
<dbReference type="SMR" id="P44502"/>
<dbReference type="STRING" id="71421.HI_0086"/>
<dbReference type="EnsemblBacteria" id="AAC21764">
    <property type="protein sequence ID" value="AAC21764"/>
    <property type="gene ID" value="HI_0086"/>
</dbReference>
<dbReference type="KEGG" id="hin:HI_0086"/>
<dbReference type="PATRIC" id="fig|71421.8.peg.87"/>
<dbReference type="eggNOG" id="COG0626">
    <property type="taxonomic scope" value="Bacteria"/>
</dbReference>
<dbReference type="HOGENOM" id="CLU_018986_2_0_6"/>
<dbReference type="OrthoDB" id="9805807at2"/>
<dbReference type="PhylomeDB" id="P44502"/>
<dbReference type="Proteomes" id="UP000000579">
    <property type="component" value="Chromosome"/>
</dbReference>
<dbReference type="GO" id="GO:0005737">
    <property type="term" value="C:cytoplasm"/>
    <property type="evidence" value="ECO:0000318"/>
    <property type="project" value="GO_Central"/>
</dbReference>
<dbReference type="GO" id="GO:0016846">
    <property type="term" value="F:carbon-sulfur lyase activity"/>
    <property type="evidence" value="ECO:0000318"/>
    <property type="project" value="GO_Central"/>
</dbReference>
<dbReference type="GO" id="GO:0003962">
    <property type="term" value="F:cystathionine gamma-synthase activity"/>
    <property type="evidence" value="ECO:0007669"/>
    <property type="project" value="UniProtKB-EC"/>
</dbReference>
<dbReference type="GO" id="GO:0030170">
    <property type="term" value="F:pyridoxal phosphate binding"/>
    <property type="evidence" value="ECO:0000318"/>
    <property type="project" value="GO_Central"/>
</dbReference>
<dbReference type="GO" id="GO:0009086">
    <property type="term" value="P:methionine biosynthetic process"/>
    <property type="evidence" value="ECO:0007669"/>
    <property type="project" value="UniProtKB-KW"/>
</dbReference>
<dbReference type="GO" id="GO:0019346">
    <property type="term" value="P:transsulfuration"/>
    <property type="evidence" value="ECO:0000318"/>
    <property type="project" value="GO_Central"/>
</dbReference>
<dbReference type="CDD" id="cd00614">
    <property type="entry name" value="CGS_like"/>
    <property type="match status" value="1"/>
</dbReference>
<dbReference type="FunFam" id="3.40.640.10:FF:000009">
    <property type="entry name" value="Cystathionine gamma-synthase homolog"/>
    <property type="match status" value="1"/>
</dbReference>
<dbReference type="FunFam" id="3.90.1150.10:FF:000075">
    <property type="entry name" value="Cystathionine gamma-synthase/O-acetylhomoserine thiolyase"/>
    <property type="match status" value="1"/>
</dbReference>
<dbReference type="FunFam" id="3.90.1150.10:FF:000070">
    <property type="entry name" value="Putative cystathionine gamma-synthase"/>
    <property type="match status" value="1"/>
</dbReference>
<dbReference type="Gene3D" id="3.90.1150.10">
    <property type="entry name" value="Aspartate Aminotransferase, domain 1"/>
    <property type="match status" value="2"/>
</dbReference>
<dbReference type="Gene3D" id="3.40.640.10">
    <property type="entry name" value="Type I PLP-dependent aspartate aminotransferase-like (Major domain)"/>
    <property type="match status" value="1"/>
</dbReference>
<dbReference type="InterPro" id="IPR000277">
    <property type="entry name" value="Cys/Met-Metab_PyrdxlP-dep_enz"/>
</dbReference>
<dbReference type="InterPro" id="IPR054542">
    <property type="entry name" value="Cys_met_metab_PP"/>
</dbReference>
<dbReference type="InterPro" id="IPR015424">
    <property type="entry name" value="PyrdxlP-dep_Trfase"/>
</dbReference>
<dbReference type="InterPro" id="IPR015421">
    <property type="entry name" value="PyrdxlP-dep_Trfase_major"/>
</dbReference>
<dbReference type="InterPro" id="IPR015422">
    <property type="entry name" value="PyrdxlP-dep_Trfase_small"/>
</dbReference>
<dbReference type="NCBIfam" id="NF006095">
    <property type="entry name" value="PRK08247.1"/>
    <property type="match status" value="1"/>
</dbReference>
<dbReference type="PANTHER" id="PTHR11808:SF90">
    <property type="entry name" value="CYSTATHIONINE GAMMA-SYNTHASE"/>
    <property type="match status" value="1"/>
</dbReference>
<dbReference type="PANTHER" id="PTHR11808">
    <property type="entry name" value="TRANS-SULFURATION ENZYME FAMILY MEMBER"/>
    <property type="match status" value="1"/>
</dbReference>
<dbReference type="Pfam" id="PF01053">
    <property type="entry name" value="Cys_Met_Meta_PP"/>
    <property type="match status" value="1"/>
</dbReference>
<dbReference type="PIRSF" id="PIRSF001434">
    <property type="entry name" value="CGS"/>
    <property type="match status" value="1"/>
</dbReference>
<dbReference type="SUPFAM" id="SSF53383">
    <property type="entry name" value="PLP-dependent transferases"/>
    <property type="match status" value="1"/>
</dbReference>
<dbReference type="PROSITE" id="PS00868">
    <property type="entry name" value="CYS_MET_METAB_PP"/>
    <property type="match status" value="1"/>
</dbReference>
<sequence>MTQQYAIDTLLAQAGNRSDERTGAVSAPIFLSTAYGHCGIGESTGFDYTRTKNPTRTVLEETIAKLENGDRGFAFSSGMAAIQVLMTLFTAPDEWIVSSDVYGGTYRLLDFSYKNNNSVKPVYVNTASASAIEAAINPNTKAIFIETPSNPLMEECDVVEIAKLAKKHNLMLIVDNTFLTPVLSRPLDLGADVVIHSGTKYIAGHNDALVGLIVAKGQELCDRIAYIQNGAGAVLSPFDSWLTIRGMKTLSLRMKRHQENAQAIAEFLKAQPQVESVLYPNKGGMLSFRLQDEAWVNTFLKSIKLITFAESLGGTESFITYPATQTHMDIPESERVARGITNTLLRFSVGIEDVEDIKADLLQAFANLK</sequence>
<name>METB_HAEIN</name>
<reference key="1">
    <citation type="journal article" date="1995" name="Science">
        <title>Whole-genome random sequencing and assembly of Haemophilus influenzae Rd.</title>
        <authorList>
            <person name="Fleischmann R.D."/>
            <person name="Adams M.D."/>
            <person name="White O."/>
            <person name="Clayton R.A."/>
            <person name="Kirkness E.F."/>
            <person name="Kerlavage A.R."/>
            <person name="Bult C.J."/>
            <person name="Tomb J.-F."/>
            <person name="Dougherty B.A."/>
            <person name="Merrick J.M."/>
            <person name="McKenney K."/>
            <person name="Sutton G.G."/>
            <person name="FitzHugh W."/>
            <person name="Fields C.A."/>
            <person name="Gocayne J.D."/>
            <person name="Scott J.D."/>
            <person name="Shirley R."/>
            <person name="Liu L.-I."/>
            <person name="Glodek A."/>
            <person name="Kelley J.M."/>
            <person name="Weidman J.F."/>
            <person name="Phillips C.A."/>
            <person name="Spriggs T."/>
            <person name="Hedblom E."/>
            <person name="Cotton M.D."/>
            <person name="Utterback T.R."/>
            <person name="Hanna M.C."/>
            <person name="Nguyen D.T."/>
            <person name="Saudek D.M."/>
            <person name="Brandon R.C."/>
            <person name="Fine L.D."/>
            <person name="Fritchman J.L."/>
            <person name="Fuhrmann J.L."/>
            <person name="Geoghagen N.S.M."/>
            <person name="Gnehm C.L."/>
            <person name="McDonald L.A."/>
            <person name="Small K.V."/>
            <person name="Fraser C.M."/>
            <person name="Smith H.O."/>
            <person name="Venter J.C."/>
        </authorList>
    </citation>
    <scope>NUCLEOTIDE SEQUENCE [LARGE SCALE GENOMIC DNA]</scope>
    <source>
        <strain>ATCC 51907 / DSM 11121 / KW20 / Rd</strain>
    </source>
</reference>
<comment type="function">
    <text evidence="1">Catalyzes the formation of L-cystathionine from O-succinyl-L-homoserine (OSHS) and L-cysteine, via a gamma-replacement reaction. In the absence of thiol, catalyzes gamma-elimination to form 2-oxobutanoate, succinate and ammonia (By similarity).</text>
</comment>
<comment type="catalytic activity">
    <reaction>
        <text>O-succinyl-L-homoserine + L-cysteine = L,L-cystathionine + succinate + H(+)</text>
        <dbReference type="Rhea" id="RHEA:20397"/>
        <dbReference type="ChEBI" id="CHEBI:15378"/>
        <dbReference type="ChEBI" id="CHEBI:30031"/>
        <dbReference type="ChEBI" id="CHEBI:35235"/>
        <dbReference type="ChEBI" id="CHEBI:57661"/>
        <dbReference type="ChEBI" id="CHEBI:58161"/>
        <dbReference type="EC" id="2.5.1.48"/>
    </reaction>
</comment>
<comment type="cofactor">
    <cofactor evidence="1">
        <name>pyridoxal 5'-phosphate</name>
        <dbReference type="ChEBI" id="CHEBI:597326"/>
    </cofactor>
    <text evidence="1">Binds 1 pyridoxal phosphate per subunit.</text>
</comment>
<comment type="subunit">
    <text evidence="1">Homotetramer.</text>
</comment>
<comment type="subcellular location">
    <subcellularLocation>
        <location evidence="1">Cytoplasm</location>
    </subcellularLocation>
</comment>
<comment type="similarity">
    <text evidence="2">Belongs to the trans-sulfuration enzymes family.</text>
</comment>
<comment type="sequence caution" evidence="2">
    <conflict type="erroneous initiation">
        <sequence resource="EMBL-CDS" id="AAC21764"/>
    </conflict>
</comment>
<protein>
    <recommendedName>
        <fullName>Cystathionine gamma-synthase</fullName>
        <shortName>CGS</shortName>
        <ecNumber>2.5.1.48</ecNumber>
    </recommendedName>
    <alternativeName>
        <fullName>O-succinylhomoserine (thiol)-lyase</fullName>
    </alternativeName>
</protein>
<gene>
    <name type="primary">metB</name>
    <name type="ordered locus">HI_0086</name>
</gene>
<feature type="chain" id="PRO_0000114757" description="Cystathionine gamma-synthase">
    <location>
        <begin position="1"/>
        <end position="369"/>
    </location>
</feature>
<feature type="modified residue" description="N6-(pyridoxal phosphate)lysine" evidence="1">
    <location>
        <position position="200"/>
    </location>
</feature>
<proteinExistence type="inferred from homology"/>
<keyword id="KW-0028">Amino-acid biosynthesis</keyword>
<keyword id="KW-0963">Cytoplasm</keyword>
<keyword id="KW-0486">Methionine biosynthesis</keyword>
<keyword id="KW-0663">Pyridoxal phosphate</keyword>
<keyword id="KW-1185">Reference proteome</keyword>
<keyword id="KW-0808">Transferase</keyword>
<evidence type="ECO:0000250" key="1"/>
<evidence type="ECO:0000305" key="2"/>
<organism>
    <name type="scientific">Haemophilus influenzae (strain ATCC 51907 / DSM 11121 / KW20 / Rd)</name>
    <dbReference type="NCBI Taxonomy" id="71421"/>
    <lineage>
        <taxon>Bacteria</taxon>
        <taxon>Pseudomonadati</taxon>
        <taxon>Pseudomonadota</taxon>
        <taxon>Gammaproteobacteria</taxon>
        <taxon>Pasteurellales</taxon>
        <taxon>Pasteurellaceae</taxon>
        <taxon>Haemophilus</taxon>
    </lineage>
</organism>